<name>AGO_MARPK</name>
<feature type="chain" id="PRO_0000457787" description="Protein argonaute">
    <location>
        <begin position="1"/>
        <end position="639"/>
    </location>
</feature>
<feature type="region of interest" description="N-terminal domain" evidence="2">
    <location>
        <begin position="1"/>
        <end position="100"/>
    </location>
</feature>
<feature type="region of interest" description="Linker L1" evidence="2">
    <location>
        <begin position="101"/>
        <end position="153"/>
    </location>
</feature>
<feature type="region of interest" description="PAZ domain" evidence="2">
    <location>
        <begin position="154"/>
        <end position="209"/>
    </location>
</feature>
<feature type="region of interest" description="Linker L2" evidence="2">
    <location>
        <begin position="210"/>
        <end position="292"/>
    </location>
</feature>
<feature type="region of interest" description="Mid domain" evidence="2">
    <location>
        <begin position="293"/>
        <end position="424"/>
    </location>
</feature>
<feature type="region of interest" description="PIWI domain" evidence="2">
    <location>
        <begin position="425"/>
        <end position="639"/>
    </location>
</feature>
<feature type="active site" evidence="6">
    <location>
        <position position="446"/>
    </location>
</feature>
<feature type="active site" evidence="6">
    <location>
        <position position="482"/>
    </location>
</feature>
<feature type="active site" evidence="6">
    <location>
        <position position="516"/>
    </location>
</feature>
<feature type="active site" evidence="6">
    <location>
        <position position="624"/>
    </location>
</feature>
<feature type="binding site" evidence="1">
    <location>
        <position position="446"/>
    </location>
    <ligand>
        <name>Mn(2+)</name>
        <dbReference type="ChEBI" id="CHEBI:29035"/>
        <label>1</label>
    </ligand>
</feature>
<feature type="binding site" evidence="1">
    <location>
        <position position="446"/>
    </location>
    <ligand>
        <name>Mn(2+)</name>
        <dbReference type="ChEBI" id="CHEBI:29035"/>
        <label>2</label>
    </ligand>
</feature>
<feature type="binding site" evidence="1">
    <location>
        <position position="516"/>
    </location>
    <ligand>
        <name>Mn(2+)</name>
        <dbReference type="ChEBI" id="CHEBI:29035"/>
        <label>1</label>
    </ligand>
</feature>
<feature type="binding site" evidence="5">
    <location>
        <position position="624"/>
    </location>
    <ligand>
        <name>Mn(2+)</name>
        <dbReference type="ChEBI" id="CHEBI:29035"/>
        <label>2</label>
    </ligand>
</feature>
<feature type="mutagenesis site" description="No cleavage of tDNA." evidence="2">
    <original>D</original>
    <variation>A</variation>
    <location>
        <position position="446"/>
    </location>
</feature>
<feature type="mutagenesis site" description="Wild-type cleavage of tDNA." evidence="2">
    <original>E</original>
    <variation>A</variation>
    <location>
        <position position="479"/>
    </location>
</feature>
<feature type="mutagenesis site" description="No cleavage of tDNA." evidence="2">
    <original>E</original>
    <variation>A</variation>
    <location>
        <position position="482"/>
    </location>
</feature>
<feature type="mutagenesis site" description="No cleavage of tDNA." evidence="2 3">
    <original>D</original>
    <variation>A</variation>
    <location>
        <position position="516"/>
    </location>
</feature>
<feature type="mutagenesis site" description="No cleavage of tDNA." evidence="2">
    <original>N</original>
    <variation>A</variation>
    <location>
        <position position="624"/>
    </location>
</feature>
<feature type="strand" evidence="11">
    <location>
        <begin position="3"/>
        <end position="8"/>
    </location>
</feature>
<feature type="strand" evidence="11">
    <location>
        <begin position="12"/>
        <end position="19"/>
    </location>
</feature>
<feature type="strand" evidence="12">
    <location>
        <begin position="22"/>
        <end position="24"/>
    </location>
</feature>
<feature type="helix" evidence="11">
    <location>
        <begin position="26"/>
        <end position="37"/>
    </location>
</feature>
<feature type="strand" evidence="11">
    <location>
        <begin position="48"/>
        <end position="55"/>
    </location>
</feature>
<feature type="helix" evidence="11">
    <location>
        <begin position="62"/>
        <end position="67"/>
    </location>
</feature>
<feature type="strand" evidence="11">
    <location>
        <begin position="68"/>
        <end position="76"/>
    </location>
</feature>
<feature type="turn" evidence="11">
    <location>
        <begin position="77"/>
        <end position="79"/>
    </location>
</feature>
<feature type="helix" evidence="11">
    <location>
        <begin position="81"/>
        <end position="98"/>
    </location>
</feature>
<feature type="strand" evidence="11">
    <location>
        <begin position="102"/>
        <end position="104"/>
    </location>
</feature>
<feature type="turn" evidence="11">
    <location>
        <begin position="105"/>
        <end position="107"/>
    </location>
</feature>
<feature type="strand" evidence="11">
    <location>
        <begin position="108"/>
        <end position="117"/>
    </location>
</feature>
<feature type="strand" evidence="11">
    <location>
        <begin position="124"/>
        <end position="137"/>
    </location>
</feature>
<feature type="strand" evidence="11">
    <location>
        <begin position="140"/>
        <end position="155"/>
    </location>
</feature>
<feature type="helix" evidence="11">
    <location>
        <begin position="157"/>
        <end position="159"/>
    </location>
</feature>
<feature type="strand" evidence="11">
    <location>
        <begin position="165"/>
        <end position="169"/>
    </location>
</feature>
<feature type="turn" evidence="11">
    <location>
        <begin position="170"/>
        <end position="172"/>
    </location>
</feature>
<feature type="strand" evidence="11">
    <location>
        <begin position="175"/>
        <end position="182"/>
    </location>
</feature>
<feature type="strand" evidence="11">
    <location>
        <begin position="185"/>
        <end position="189"/>
    </location>
</feature>
<feature type="strand" evidence="11">
    <location>
        <begin position="195"/>
        <end position="197"/>
    </location>
</feature>
<feature type="helix" evidence="11">
    <location>
        <begin position="201"/>
        <end position="203"/>
    </location>
</feature>
<feature type="strand" evidence="11">
    <location>
        <begin position="204"/>
        <end position="208"/>
    </location>
</feature>
<feature type="helix" evidence="11">
    <location>
        <begin position="210"/>
        <end position="215"/>
    </location>
</feature>
<feature type="helix" evidence="11">
    <location>
        <begin position="219"/>
        <end position="228"/>
    </location>
</feature>
<feature type="helix" evidence="11">
    <location>
        <begin position="231"/>
        <end position="235"/>
    </location>
</feature>
<feature type="helix" evidence="11">
    <location>
        <begin position="237"/>
        <end position="240"/>
    </location>
</feature>
<feature type="helix" evidence="11">
    <location>
        <begin position="242"/>
        <end position="246"/>
    </location>
</feature>
<feature type="strand" evidence="12">
    <location>
        <begin position="250"/>
        <end position="252"/>
    </location>
</feature>
<feature type="strand" evidence="11">
    <location>
        <begin position="260"/>
        <end position="263"/>
    </location>
</feature>
<feature type="strand" evidence="12">
    <location>
        <begin position="268"/>
        <end position="270"/>
    </location>
</feature>
<feature type="strand" evidence="11">
    <location>
        <begin position="274"/>
        <end position="276"/>
    </location>
</feature>
<feature type="helix" evidence="11">
    <location>
        <begin position="278"/>
        <end position="280"/>
    </location>
</feature>
<feature type="helix" evidence="11">
    <location>
        <begin position="281"/>
        <end position="284"/>
    </location>
</feature>
<feature type="strand" evidence="11">
    <location>
        <begin position="292"/>
        <end position="300"/>
    </location>
</feature>
<feature type="helix" evidence="11">
    <location>
        <begin position="302"/>
        <end position="307"/>
    </location>
</feature>
<feature type="helix" evidence="11">
    <location>
        <begin position="309"/>
        <end position="316"/>
    </location>
</feature>
<feature type="helix" evidence="11">
    <location>
        <begin position="322"/>
        <end position="330"/>
    </location>
</feature>
<feature type="strand" evidence="11">
    <location>
        <begin position="333"/>
        <end position="337"/>
    </location>
</feature>
<feature type="turn" evidence="11">
    <location>
        <begin position="341"/>
        <end position="343"/>
    </location>
</feature>
<feature type="strand" evidence="11">
    <location>
        <begin position="346"/>
        <end position="349"/>
    </location>
</feature>
<feature type="turn" evidence="11">
    <location>
        <begin position="352"/>
        <end position="355"/>
    </location>
</feature>
<feature type="helix" evidence="11">
    <location>
        <begin position="361"/>
        <end position="364"/>
    </location>
</feature>
<feature type="strand" evidence="11">
    <location>
        <begin position="371"/>
        <end position="378"/>
    </location>
</feature>
<feature type="helix" evidence="11">
    <location>
        <begin position="384"/>
        <end position="389"/>
    </location>
</feature>
<feature type="strand" evidence="11">
    <location>
        <begin position="394"/>
        <end position="400"/>
    </location>
</feature>
<feature type="helix" evidence="11">
    <location>
        <begin position="401"/>
        <end position="406"/>
    </location>
</feature>
<feature type="helix" evidence="11">
    <location>
        <begin position="409"/>
        <end position="421"/>
    </location>
</feature>
<feature type="strand" evidence="12">
    <location>
        <begin position="423"/>
        <end position="425"/>
    </location>
</feature>
<feature type="helix" evidence="11">
    <location>
        <begin position="432"/>
        <end position="434"/>
    </location>
</feature>
<feature type="helix" evidence="12">
    <location>
        <begin position="435"/>
        <end position="439"/>
    </location>
</feature>
<feature type="strand" evidence="11">
    <location>
        <begin position="440"/>
        <end position="450"/>
    </location>
</feature>
<feature type="strand" evidence="12">
    <location>
        <begin position="451"/>
        <end position="453"/>
    </location>
</feature>
<feature type="strand" evidence="11">
    <location>
        <begin position="455"/>
        <end position="463"/>
    </location>
</feature>
<feature type="strand" evidence="11">
    <location>
        <begin position="469"/>
        <end position="479"/>
    </location>
</feature>
<feature type="helix" evidence="11">
    <location>
        <begin position="482"/>
        <end position="504"/>
    </location>
</feature>
<feature type="strand" evidence="11">
    <location>
        <begin position="509"/>
        <end position="517"/>
    </location>
</feature>
<feature type="helix" evidence="11">
    <location>
        <begin position="523"/>
        <end position="529"/>
    </location>
</feature>
<feature type="turn" evidence="12">
    <location>
        <begin position="532"/>
        <end position="534"/>
    </location>
</feature>
<feature type="strand" evidence="11">
    <location>
        <begin position="536"/>
        <end position="543"/>
    </location>
</feature>
<feature type="strand" evidence="11">
    <location>
        <begin position="557"/>
        <end position="562"/>
    </location>
</feature>
<feature type="strand" evidence="11">
    <location>
        <begin position="565"/>
        <end position="568"/>
    </location>
</feature>
<feature type="strand" evidence="11">
    <location>
        <begin position="573"/>
        <end position="575"/>
    </location>
</feature>
<feature type="strand" evidence="11">
    <location>
        <begin position="579"/>
        <end position="586"/>
    </location>
</feature>
<feature type="strand" evidence="11">
    <location>
        <begin position="588"/>
        <end position="590"/>
    </location>
</feature>
<feature type="helix" evidence="11">
    <location>
        <begin position="592"/>
        <end position="602"/>
    </location>
</feature>
<feature type="helix" evidence="11">
    <location>
        <begin position="618"/>
        <end position="628"/>
    </location>
</feature>
<feature type="helix" evidence="11">
    <location>
        <begin position="632"/>
        <end position="635"/>
    </location>
</feature>
<gene>
    <name evidence="4" type="primary">ago</name>
    <name evidence="7" type="ordered locus">Marpi_0405</name>
</gene>
<sequence>MYLNLYKIDIPKKIKRLYFYNPDMEPKLFARNLSRVNNFKFQDSNDLVWIEIPDIDFQITPKNVFQYKVEKEEIIKEEEDKKLFVKTLYKYIKKLFLDNDFYFKKGNNFISNSEVFSLDSNENVNAHLTYKIKIHNISNEYYLSILPKFTFLSKEPALESAIKSGYLYNIKSGKSFPYISGLDGILKIDIGNNQIVEVAYPENYLFNFTTRDAEKYGFSKEVHEIYKNKVFEGFKKIPKTLGFLNKITNLNENYQLKDGYKIFINVIYKFKNGESRYAKDVFKYSFYKNEQPLKAIFFFSSKKQFFEVQKSLKELFHNKHSVFYRAAAELGFSKVEFLRDSKTKSSAFLYNPEEFTVKNTEFINQIEDNVMAIVLLDKYIGNIDPLVRNFPDNLILQPILKEKLEDIKPFIIKSYVYKMGNFIPECKPFILKKMEDKEKNLYIGIDLSHDTYARKTNLCIAAVDNTGDILYIGKHKNLELNEKMNLDILEKEYIKAFEKYIEKFNVSPENVFILRDGRFIEDIEIIKNFISYNDTKYTLVEVNKNTNINSYDDLKEWIIKLDENTYIYYPKTFLNQKGVEVKILENNTDYTIEEIIEQIYLLTRVAHSTPYTNYKLPYPLHIANKVALTDYEWKLYIPY</sequence>
<organism>
    <name type="scientific">Marinitoga piezophila (strain DSM 14283 / JCM 11233 / KA3)</name>
    <dbReference type="NCBI Taxonomy" id="443254"/>
    <lineage>
        <taxon>Bacteria</taxon>
        <taxon>Thermotogati</taxon>
        <taxon>Thermotogota</taxon>
        <taxon>Thermotogae</taxon>
        <taxon>Petrotogales</taxon>
        <taxon>Petrotogaceae</taxon>
        <taxon>Marinitoga</taxon>
    </lineage>
</organism>
<accession>H2J4R4</accession>
<reference evidence="7" key="1">
    <citation type="journal article" date="2012" name="J. Bacteriol.">
        <title>Complete Genome Sequence of the Thermophilic, Piezophilic, Heterotrophic Bacterium Marinitoga piezophila KA3.</title>
        <authorList>
            <person name="Lucas S."/>
            <person name="Han J."/>
            <person name="Lapidus A."/>
            <person name="Cheng J.F."/>
            <person name="Goodwin L.A."/>
            <person name="Pitluck S."/>
            <person name="Peters L."/>
            <person name="Mikhailova N."/>
            <person name="Teshima H."/>
            <person name="Detter J.C."/>
            <person name="Han C."/>
            <person name="Tapia R."/>
            <person name="Land M."/>
            <person name="Hauser L."/>
            <person name="Kyrpides N.C."/>
            <person name="Ivanova N."/>
            <person name="Pagani I."/>
            <person name="Vannier P."/>
            <person name="Oger P."/>
            <person name="Bartlett D.H."/>
            <person name="Noll K.M."/>
            <person name="Woyke T."/>
            <person name="Jebbar M."/>
        </authorList>
    </citation>
    <scope>NUCLEOTIDE SEQUENCE [LARGE SCALE GENOMIC DNA]</scope>
    <source>
        <strain>DSM 14283 / JCM 11233 / KA3</strain>
    </source>
</reference>
<reference evidence="9" key="2">
    <citation type="journal article" date="2016" name="Proc. Natl. Acad. Sci. U.S.A.">
        <title>A bacterial Argonaute with noncanonical guide RNA specificity.</title>
        <authorList>
            <person name="Kaya E."/>
            <person name="Doxzen K.W."/>
            <person name="Knoll K.R."/>
            <person name="Wilson R.C."/>
            <person name="Strutt S.C."/>
            <person name="Kranzusch P.J."/>
            <person name="Doudna J.A."/>
        </authorList>
    </citation>
    <scope>X-RAY CRYSTALLOGRAPHY (1.95 ANGSTROMS) OF 2-639 IN COMPLEX WITH 5'-OH-GUIDE RNA</scope>
    <scope>FUNCTION</scope>
    <scope>CATALYTIC ACTIVITY</scope>
    <scope>COFACTOR</scope>
    <scope>SUBCELLULAR LOCATION</scope>
    <scope>INDUCTION</scope>
    <scope>DOMAIN</scope>
    <scope>MUTAGENESIS OF ASP-446; GLU-479; GLU-482; ASP-516 AND ASN-624</scope>
    <source>
        <strain>DSM 14283 / JCM 11233 / KA3</strain>
    </source>
</reference>
<reference evidence="10" key="3">
    <citation type="journal article" date="2017" name="PLoS ONE">
        <title>DNA recognition by an RNA-guided bacterial Argonaute.</title>
        <authorList>
            <person name="Doxzen K.W."/>
            <person name="Doudna J.A."/>
        </authorList>
    </citation>
    <scope>X-RAY CRYSTALLOGRAPHY (3.20 ANGSTROMS) OF 2-639 IN COMPLEX WITH 5'-OH-GUIDE RNA:TARGET DNA DUPLEX</scope>
    <scope>FUNCTION</scope>
    <scope>CATALYTIC ACTIVITY</scope>
    <scope>MUTAGENESIS OF ASP-516</scope>
</reference>
<dbReference type="EC" id="3.1.24.-" evidence="2"/>
<dbReference type="EMBL" id="CP003257">
    <property type="protein sequence ID" value="AEX84849.1"/>
    <property type="molecule type" value="Genomic_DNA"/>
</dbReference>
<dbReference type="RefSeq" id="WP_014295921.1">
    <property type="nucleotide sequence ID" value="NC_016751.1"/>
</dbReference>
<dbReference type="PDB" id="5I4A">
    <property type="method" value="X-ray"/>
    <property type="resolution" value="1.95 A"/>
    <property type="chains" value="A/C=2-639"/>
</dbReference>
<dbReference type="PDB" id="5UX0">
    <property type="method" value="X-ray"/>
    <property type="resolution" value="3.20 A"/>
    <property type="chains" value="A/D=2-639"/>
</dbReference>
<dbReference type="PDBsum" id="5I4A"/>
<dbReference type="PDBsum" id="5UX0"/>
<dbReference type="SMR" id="H2J4R4"/>
<dbReference type="STRING" id="443254.Marpi_0405"/>
<dbReference type="KEGG" id="mpz:Marpi_0405"/>
<dbReference type="eggNOG" id="COG1431">
    <property type="taxonomic scope" value="Bacteria"/>
</dbReference>
<dbReference type="HOGENOM" id="CLU_428144_0_0_0"/>
<dbReference type="OrthoDB" id="42310at2"/>
<dbReference type="Proteomes" id="UP000007161">
    <property type="component" value="Chromosome"/>
</dbReference>
<dbReference type="GO" id="GO:0005737">
    <property type="term" value="C:cytoplasm"/>
    <property type="evidence" value="ECO:0007669"/>
    <property type="project" value="UniProtKB-SubCell"/>
</dbReference>
<dbReference type="GO" id="GO:0003677">
    <property type="term" value="F:DNA binding"/>
    <property type="evidence" value="ECO:0007669"/>
    <property type="project" value="UniProtKB-KW"/>
</dbReference>
<dbReference type="GO" id="GO:0004520">
    <property type="term" value="F:DNA endonuclease activity"/>
    <property type="evidence" value="ECO:0000314"/>
    <property type="project" value="UniProtKB"/>
</dbReference>
<dbReference type="GO" id="GO:0046872">
    <property type="term" value="F:metal ion binding"/>
    <property type="evidence" value="ECO:0007669"/>
    <property type="project" value="UniProtKB-KW"/>
</dbReference>
<dbReference type="GO" id="GO:0003723">
    <property type="term" value="F:RNA binding"/>
    <property type="evidence" value="ECO:0007669"/>
    <property type="project" value="UniProtKB-KW"/>
</dbReference>
<dbReference type="Gene3D" id="3.30.420.10">
    <property type="entry name" value="Ribonuclease H-like superfamily/Ribonuclease H"/>
    <property type="match status" value="1"/>
</dbReference>
<dbReference type="InterPro" id="IPR054434">
    <property type="entry name" value="Ago_MID_bact"/>
</dbReference>
<dbReference type="InterPro" id="IPR054387">
    <property type="entry name" value="Ago_N_bact"/>
</dbReference>
<dbReference type="InterPro" id="IPR003165">
    <property type="entry name" value="Piwi"/>
</dbReference>
<dbReference type="InterPro" id="IPR012337">
    <property type="entry name" value="RNaseH-like_sf"/>
</dbReference>
<dbReference type="InterPro" id="IPR036397">
    <property type="entry name" value="RNaseH_sf"/>
</dbReference>
<dbReference type="Pfam" id="PF22362">
    <property type="entry name" value="Ago_MID_bact"/>
    <property type="match status" value="1"/>
</dbReference>
<dbReference type="Pfam" id="PF22136">
    <property type="entry name" value="MpAgo_N-like"/>
    <property type="match status" value="1"/>
</dbReference>
<dbReference type="SMART" id="SM00950">
    <property type="entry name" value="Piwi"/>
    <property type="match status" value="1"/>
</dbReference>
<dbReference type="SUPFAM" id="SSF53098">
    <property type="entry name" value="Ribonuclease H-like"/>
    <property type="match status" value="1"/>
</dbReference>
<keyword id="KW-0002">3D-structure</keyword>
<keyword id="KW-0963">Cytoplasm</keyword>
<keyword id="KW-0238">DNA-binding</keyword>
<keyword id="KW-0255">Endonuclease</keyword>
<keyword id="KW-0378">Hydrolase</keyword>
<keyword id="KW-0464">Manganese</keyword>
<keyword id="KW-0479">Metal-binding</keyword>
<keyword id="KW-0540">Nuclease</keyword>
<keyword id="KW-1185">Reference proteome</keyword>
<keyword id="KW-0694">RNA-binding</keyword>
<proteinExistence type="evidence at protein level"/>
<comment type="function">
    <text evidence="2 3">An RNA-guided ssDNA endonuclease that may play a role in defense against invading mobile genetic elements. Uses short 5'-OH-ssRNA sequences as guides (gRNA) to bind complementary target DNA (tDNA) or target RNA resulting in target cleavage. The cleavage site is 10 nucleotides (nt) downstream of the target residue base-paired with the 5'-end of the gRNA. Reaction rates are fastest on 5'-OH-gRNA:tDNA followed by 5'-OH-gRNA:target RNA. gRNA between 17-21 nt supports equivalent rates of cleavage, has no preferred 5'-nt. Has weak activity on tDNA with 5'-phospho-gRNA, yielding products 1-2 nt longer (PubMed:27035975). Unlike other characterized prokaryotic Ago proteins symmetric mismatches centered around the cleavage site reduce cleavage efficiency (PubMed:28520746).</text>
</comment>
<comment type="cofactor">
    <cofactor evidence="2">
        <name>Mn(2+)</name>
        <dbReference type="ChEBI" id="CHEBI:29035"/>
    </cofactor>
    <text evidence="1 2">tDNA cleavage prefers Mn(2+) over Mg(2+) (PubMed:27035975). Cleavage probaby requires 2 divalent metal cations (By similarity).</text>
</comment>
<comment type="subcellular location">
    <subcellularLocation>
        <location evidence="6">Cytoplasm</location>
    </subcellularLocation>
</comment>
<comment type="induction">
    <text evidence="2">Expressed at low levels (at protein level). Probably part of a cas1-cas2-ago operon.</text>
</comment>
<comment type="domain">
    <text evidence="2 3 8">Has 4 domains (N-terminal, PAZ, Mid and PIWI). The N-terminal and PAZ domains are joined by linker L1, the PAZ and Mid domains are joined by linker L2. The domains assemble in 2 lobes; the PAZ lobe consists of the N-terminal, L1, PAZ and L2 domains, while the PIWI lobe has the Mid and PIWI domains. The PIWI domain assumes an RNase H fold and has the catalytic residues. Compared to orthologs, the N-terminal domain has a different secondary structure and position. The 5'-end of the gRNA is anchored between the MID and PIWI domains while the 3'-end is in the PAZ domain (PubMed:27035975). In the gRNA:tDNA complex the 5'-end of gRNA remains anchored in the Mid domain and is unpaired with tDNA, while the 3'-end of the gRNA is released from the PAZ domain. Upon release of the 3'-end of the gRNA from the PAZ domain during nucleic acid duplex formation, conformational changes allow Glu-482 to move to complete the active site. An N-lobe rearrangement allows a unique, straight orientation of the hybrid helix not seen in other Ago ternary complexes (PubMed:28520746).</text>
</comment>
<comment type="miscellaneous">
    <text evidence="2">Unlike most prokaryotic argonautes, this is encoded in a CRISPR-cas subtype III-B locus.</text>
</comment>
<comment type="similarity">
    <text evidence="5">Belongs to the argonaute family. Long pAgo subfamily.</text>
</comment>
<protein>
    <recommendedName>
        <fullName evidence="4">Protein argonaute</fullName>
        <shortName evidence="4">MpAgo</shortName>
        <ecNumber evidence="2">3.1.24.-</ecNumber>
    </recommendedName>
</protein>
<evidence type="ECO:0000250" key="1">
    <source>
        <dbReference type="UniProtKB" id="Q746M7"/>
    </source>
</evidence>
<evidence type="ECO:0000269" key="2">
    <source>
    </source>
</evidence>
<evidence type="ECO:0000269" key="3">
    <source>
    </source>
</evidence>
<evidence type="ECO:0000303" key="4">
    <source>
    </source>
</evidence>
<evidence type="ECO:0000305" key="5"/>
<evidence type="ECO:0000305" key="6">
    <source>
    </source>
</evidence>
<evidence type="ECO:0000312" key="7">
    <source>
        <dbReference type="EMBL" id="AEX84849.1"/>
    </source>
</evidence>
<evidence type="ECO:0000312" key="8">
    <source>
        <dbReference type="PDB" id="5UX0"/>
    </source>
</evidence>
<evidence type="ECO:0007744" key="9">
    <source>
        <dbReference type="PDB" id="5I4A"/>
    </source>
</evidence>
<evidence type="ECO:0007744" key="10">
    <source>
        <dbReference type="PDB" id="5UX0"/>
    </source>
</evidence>
<evidence type="ECO:0007829" key="11">
    <source>
        <dbReference type="PDB" id="5I4A"/>
    </source>
</evidence>
<evidence type="ECO:0007829" key="12">
    <source>
        <dbReference type="PDB" id="5UX0"/>
    </source>
</evidence>